<reference key="1">
    <citation type="journal article" date="2007" name="Genome Res.">
        <title>Genome sequence of a proteolytic (Group I) Clostridium botulinum strain Hall A and comparative analysis of the clostridial genomes.</title>
        <authorList>
            <person name="Sebaihia M."/>
            <person name="Peck M.W."/>
            <person name="Minton N.P."/>
            <person name="Thomson N.R."/>
            <person name="Holden M.T.G."/>
            <person name="Mitchell W.J."/>
            <person name="Carter A.T."/>
            <person name="Bentley S.D."/>
            <person name="Mason D.R."/>
            <person name="Crossman L."/>
            <person name="Paul C.J."/>
            <person name="Ivens A."/>
            <person name="Wells-Bennik M.H.J."/>
            <person name="Davis I.J."/>
            <person name="Cerdeno-Tarraga A.M."/>
            <person name="Churcher C."/>
            <person name="Quail M.A."/>
            <person name="Chillingworth T."/>
            <person name="Feltwell T."/>
            <person name="Fraser A."/>
            <person name="Goodhead I."/>
            <person name="Hance Z."/>
            <person name="Jagels K."/>
            <person name="Larke N."/>
            <person name="Maddison M."/>
            <person name="Moule S."/>
            <person name="Mungall K."/>
            <person name="Norbertczak H."/>
            <person name="Rabbinowitsch E."/>
            <person name="Sanders M."/>
            <person name="Simmonds M."/>
            <person name="White B."/>
            <person name="Whithead S."/>
            <person name="Parkhill J."/>
        </authorList>
    </citation>
    <scope>NUCLEOTIDE SEQUENCE [LARGE SCALE GENOMIC DNA]</scope>
    <source>
        <strain>Hall / ATCC 3502 / NCTC 13319 / Type A</strain>
    </source>
</reference>
<reference key="2">
    <citation type="journal article" date="2007" name="PLoS ONE">
        <title>Analysis of the neurotoxin complex genes in Clostridium botulinum A1-A4 and B1 strains: BoNT/A3, /Ba4 and /B1 clusters are located within plasmids.</title>
        <authorList>
            <person name="Smith T.J."/>
            <person name="Hill K.K."/>
            <person name="Foley B.T."/>
            <person name="Detter J.C."/>
            <person name="Munk A.C."/>
            <person name="Bruce D.C."/>
            <person name="Doggett N.A."/>
            <person name="Smith L.A."/>
            <person name="Marks J.D."/>
            <person name="Xie G."/>
            <person name="Brettin T.S."/>
        </authorList>
    </citation>
    <scope>NUCLEOTIDE SEQUENCE [LARGE SCALE GENOMIC DNA]</scope>
    <source>
        <strain>Hall / ATCC 3502 / NCTC 13319 / Type A</strain>
    </source>
</reference>
<name>TRMB_CLOBH</name>
<organism>
    <name type="scientific">Clostridium botulinum (strain Hall / ATCC 3502 / NCTC 13319 / Type A)</name>
    <dbReference type="NCBI Taxonomy" id="441771"/>
    <lineage>
        <taxon>Bacteria</taxon>
        <taxon>Bacillati</taxon>
        <taxon>Bacillota</taxon>
        <taxon>Clostridia</taxon>
        <taxon>Eubacteriales</taxon>
        <taxon>Clostridiaceae</taxon>
        <taxon>Clostridium</taxon>
    </lineage>
</organism>
<dbReference type="EC" id="2.1.1.33" evidence="1"/>
<dbReference type="EMBL" id="CP000727">
    <property type="protein sequence ID" value="ABS38078.1"/>
    <property type="molecule type" value="Genomic_DNA"/>
</dbReference>
<dbReference type="EMBL" id="AM412317">
    <property type="protein sequence ID" value="CAL82053.1"/>
    <property type="molecule type" value="Genomic_DNA"/>
</dbReference>
<dbReference type="RefSeq" id="WP_003355768.1">
    <property type="nucleotide sequence ID" value="NC_009698.1"/>
</dbReference>
<dbReference type="RefSeq" id="YP_001253043.1">
    <property type="nucleotide sequence ID" value="NC_009495.1"/>
</dbReference>
<dbReference type="RefSeq" id="YP_001386456.1">
    <property type="nucleotide sequence ID" value="NC_009698.1"/>
</dbReference>
<dbReference type="SMR" id="A5HZ44"/>
<dbReference type="GeneID" id="5184754"/>
<dbReference type="KEGG" id="cbh:CLC_0573"/>
<dbReference type="KEGG" id="cbo:CBO0499"/>
<dbReference type="PATRIC" id="fig|413999.7.peg.502"/>
<dbReference type="HOGENOM" id="CLU_050910_2_1_9"/>
<dbReference type="UniPathway" id="UPA00989"/>
<dbReference type="PRO" id="PR:A5HZ44"/>
<dbReference type="Proteomes" id="UP000001986">
    <property type="component" value="Chromosome"/>
</dbReference>
<dbReference type="GO" id="GO:0043527">
    <property type="term" value="C:tRNA methyltransferase complex"/>
    <property type="evidence" value="ECO:0000318"/>
    <property type="project" value="GO_Central"/>
</dbReference>
<dbReference type="GO" id="GO:0008176">
    <property type="term" value="F:tRNA (guanine(46)-N7)-methyltransferase activity"/>
    <property type="evidence" value="ECO:0000318"/>
    <property type="project" value="GO_Central"/>
</dbReference>
<dbReference type="GO" id="GO:0036265">
    <property type="term" value="P:RNA (guanine-N7)-methylation"/>
    <property type="evidence" value="ECO:0000318"/>
    <property type="project" value="GO_Central"/>
</dbReference>
<dbReference type="GO" id="GO:0030488">
    <property type="term" value="P:tRNA methylation"/>
    <property type="evidence" value="ECO:0000318"/>
    <property type="project" value="GO_Central"/>
</dbReference>
<dbReference type="FunFam" id="3.40.50.150:FF:000396">
    <property type="entry name" value="tRNA (guanine-N(7)-)-methyltransferase"/>
    <property type="match status" value="1"/>
</dbReference>
<dbReference type="Gene3D" id="3.40.50.150">
    <property type="entry name" value="Vaccinia Virus protein VP39"/>
    <property type="match status" value="1"/>
</dbReference>
<dbReference type="HAMAP" id="MF_01057">
    <property type="entry name" value="tRNA_methyltr_TrmB"/>
    <property type="match status" value="1"/>
</dbReference>
<dbReference type="InterPro" id="IPR029063">
    <property type="entry name" value="SAM-dependent_MTases_sf"/>
</dbReference>
<dbReference type="InterPro" id="IPR003358">
    <property type="entry name" value="tRNA_(Gua-N-7)_MeTrfase_Trmb"/>
</dbReference>
<dbReference type="InterPro" id="IPR055361">
    <property type="entry name" value="tRNA_methyltr_TrmB_bact"/>
</dbReference>
<dbReference type="NCBIfam" id="NF001080">
    <property type="entry name" value="PRK00121.2-2"/>
    <property type="match status" value="1"/>
</dbReference>
<dbReference type="NCBIfam" id="TIGR00091">
    <property type="entry name" value="tRNA (guanosine(46)-N7)-methyltransferase TrmB"/>
    <property type="match status" value="1"/>
</dbReference>
<dbReference type="PANTHER" id="PTHR23417">
    <property type="entry name" value="3-DEOXY-D-MANNO-OCTULOSONIC-ACID TRANSFERASE/TRNA GUANINE-N 7 - -METHYLTRANSFERASE"/>
    <property type="match status" value="1"/>
</dbReference>
<dbReference type="PANTHER" id="PTHR23417:SF14">
    <property type="entry name" value="PENTACOTRIPEPTIDE-REPEAT REGION OF PRORP DOMAIN-CONTAINING PROTEIN"/>
    <property type="match status" value="1"/>
</dbReference>
<dbReference type="Pfam" id="PF02390">
    <property type="entry name" value="Methyltransf_4"/>
    <property type="match status" value="1"/>
</dbReference>
<dbReference type="SUPFAM" id="SSF53335">
    <property type="entry name" value="S-adenosyl-L-methionine-dependent methyltransferases"/>
    <property type="match status" value="1"/>
</dbReference>
<dbReference type="PROSITE" id="PS51625">
    <property type="entry name" value="SAM_MT_TRMB"/>
    <property type="match status" value="1"/>
</dbReference>
<accession>A5HZ44</accession>
<accession>A7G137</accession>
<feature type="chain" id="PRO_1000136346" description="tRNA (guanine-N(7)-)-methyltransferase">
    <location>
        <begin position="1"/>
        <end position="217"/>
    </location>
</feature>
<feature type="region of interest" description="Interaction with RNA" evidence="1">
    <location>
        <begin position="129"/>
        <end position="134"/>
    </location>
</feature>
<feature type="binding site" evidence="1">
    <location>
        <position position="43"/>
    </location>
    <ligand>
        <name>S-adenosyl-L-methionine</name>
        <dbReference type="ChEBI" id="CHEBI:59789"/>
    </ligand>
</feature>
<feature type="binding site" evidence="1">
    <location>
        <position position="68"/>
    </location>
    <ligand>
        <name>S-adenosyl-L-methionine</name>
        <dbReference type="ChEBI" id="CHEBI:59789"/>
    </ligand>
</feature>
<feature type="binding site" evidence="1">
    <location>
        <position position="101"/>
    </location>
    <ligand>
        <name>S-adenosyl-L-methionine</name>
        <dbReference type="ChEBI" id="CHEBI:59789"/>
    </ligand>
</feature>
<feature type="binding site" evidence="1">
    <location>
        <position position="123"/>
    </location>
    <ligand>
        <name>S-adenosyl-L-methionine</name>
        <dbReference type="ChEBI" id="CHEBI:59789"/>
    </ligand>
</feature>
<feature type="binding site" evidence="1">
    <location>
        <position position="127"/>
    </location>
    <ligand>
        <name>substrate</name>
    </ligand>
</feature>
<feature type="binding site" evidence="1">
    <location>
        <position position="159"/>
    </location>
    <ligand>
        <name>substrate</name>
    </ligand>
</feature>
<feature type="binding site" evidence="1">
    <location>
        <begin position="196"/>
        <end position="199"/>
    </location>
    <ligand>
        <name>substrate</name>
    </ligand>
</feature>
<evidence type="ECO:0000255" key="1">
    <source>
        <dbReference type="HAMAP-Rule" id="MF_01057"/>
    </source>
</evidence>
<gene>
    <name evidence="1" type="primary">trmB</name>
    <name type="ordered locus">CBO0499</name>
    <name type="ordered locus">CLC_0573</name>
</gene>
<comment type="function">
    <text evidence="1">Catalyzes the formation of N(7)-methylguanine at position 46 (m7G46) in tRNA.</text>
</comment>
<comment type="catalytic activity">
    <reaction evidence="1">
        <text>guanosine(46) in tRNA + S-adenosyl-L-methionine = N(7)-methylguanosine(46) in tRNA + S-adenosyl-L-homocysteine</text>
        <dbReference type="Rhea" id="RHEA:42708"/>
        <dbReference type="Rhea" id="RHEA-COMP:10188"/>
        <dbReference type="Rhea" id="RHEA-COMP:10189"/>
        <dbReference type="ChEBI" id="CHEBI:57856"/>
        <dbReference type="ChEBI" id="CHEBI:59789"/>
        <dbReference type="ChEBI" id="CHEBI:74269"/>
        <dbReference type="ChEBI" id="CHEBI:74480"/>
        <dbReference type="EC" id="2.1.1.33"/>
    </reaction>
</comment>
<comment type="pathway">
    <text evidence="1">tRNA modification; N(7)-methylguanine-tRNA biosynthesis.</text>
</comment>
<comment type="similarity">
    <text evidence="1">Belongs to the class I-like SAM-binding methyltransferase superfamily. TrmB family.</text>
</comment>
<proteinExistence type="inferred from homology"/>
<protein>
    <recommendedName>
        <fullName evidence="1">tRNA (guanine-N(7)-)-methyltransferase</fullName>
        <ecNumber evidence="1">2.1.1.33</ecNumber>
    </recommendedName>
    <alternativeName>
        <fullName evidence="1">tRNA (guanine(46)-N(7))-methyltransferase</fullName>
    </alternativeName>
    <alternativeName>
        <fullName evidence="1">tRNA(m7G46)-methyltransferase</fullName>
    </alternativeName>
</protein>
<keyword id="KW-0489">Methyltransferase</keyword>
<keyword id="KW-1185">Reference proteome</keyword>
<keyword id="KW-0949">S-adenosyl-L-methionine</keyword>
<keyword id="KW-0808">Transferase</keyword>
<keyword id="KW-0819">tRNA processing</keyword>
<sequence length="217" mass="26259">MRLRKKWWARPEIEASDKFAEEPKELRGKWNKEFNNNNDIHLELGCGRGGFISQLVEKNKDINYVGIDLKDEVIVYAIRKVKEKEEEVKREFKNIKFVTMNIMGIAEVFDKNEISKIYINFCNPWPKERHNKRRLTHTKLLTEYKKFLKPNTEIWFKTDDKELFEDSQEYFKESGFNIEYITYDLHNSDFKENIKTEYETKFETMGMKIMFLKARLL</sequence>